<organism>
    <name type="scientific">Brucella abortus (strain 2308)</name>
    <dbReference type="NCBI Taxonomy" id="359391"/>
    <lineage>
        <taxon>Bacteria</taxon>
        <taxon>Pseudomonadati</taxon>
        <taxon>Pseudomonadota</taxon>
        <taxon>Alphaproteobacteria</taxon>
        <taxon>Hyphomicrobiales</taxon>
        <taxon>Brucellaceae</taxon>
        <taxon>Brucella/Ochrobactrum group</taxon>
        <taxon>Brucella</taxon>
    </lineage>
</organism>
<dbReference type="EC" id="6.5.1.2" evidence="1"/>
<dbReference type="EMBL" id="AM040264">
    <property type="protein sequence ID" value="CAJ11395.1"/>
    <property type="molecule type" value="Genomic_DNA"/>
</dbReference>
<dbReference type="RefSeq" id="WP_002964528.1">
    <property type="nucleotide sequence ID" value="NZ_KN046823.1"/>
</dbReference>
<dbReference type="SMR" id="Q2YLZ6"/>
<dbReference type="STRING" id="359391.BAB1_1439"/>
<dbReference type="GeneID" id="93016281"/>
<dbReference type="KEGG" id="bmf:BAB1_1439"/>
<dbReference type="PATRIC" id="fig|359391.11.peg.890"/>
<dbReference type="HOGENOM" id="CLU_007764_2_0_5"/>
<dbReference type="Proteomes" id="UP000002719">
    <property type="component" value="Chromosome I"/>
</dbReference>
<dbReference type="GO" id="GO:0005829">
    <property type="term" value="C:cytosol"/>
    <property type="evidence" value="ECO:0007669"/>
    <property type="project" value="TreeGrafter"/>
</dbReference>
<dbReference type="GO" id="GO:0003911">
    <property type="term" value="F:DNA ligase (NAD+) activity"/>
    <property type="evidence" value="ECO:0007669"/>
    <property type="project" value="UniProtKB-UniRule"/>
</dbReference>
<dbReference type="GO" id="GO:0046872">
    <property type="term" value="F:metal ion binding"/>
    <property type="evidence" value="ECO:0007669"/>
    <property type="project" value="UniProtKB-KW"/>
</dbReference>
<dbReference type="GO" id="GO:0006281">
    <property type="term" value="P:DNA repair"/>
    <property type="evidence" value="ECO:0007669"/>
    <property type="project" value="UniProtKB-KW"/>
</dbReference>
<dbReference type="GO" id="GO:0006260">
    <property type="term" value="P:DNA replication"/>
    <property type="evidence" value="ECO:0007669"/>
    <property type="project" value="UniProtKB-KW"/>
</dbReference>
<dbReference type="CDD" id="cd17748">
    <property type="entry name" value="BRCT_DNA_ligase_like"/>
    <property type="match status" value="1"/>
</dbReference>
<dbReference type="CDD" id="cd00114">
    <property type="entry name" value="LIGANc"/>
    <property type="match status" value="1"/>
</dbReference>
<dbReference type="FunFam" id="3.30.470.30:FF:000001">
    <property type="entry name" value="DNA ligase"/>
    <property type="match status" value="1"/>
</dbReference>
<dbReference type="Gene3D" id="6.20.10.30">
    <property type="match status" value="1"/>
</dbReference>
<dbReference type="Gene3D" id="1.10.150.20">
    <property type="entry name" value="5' to 3' exonuclease, C-terminal subdomain"/>
    <property type="match status" value="2"/>
</dbReference>
<dbReference type="Gene3D" id="3.40.50.10190">
    <property type="entry name" value="BRCT domain"/>
    <property type="match status" value="1"/>
</dbReference>
<dbReference type="Gene3D" id="3.30.470.30">
    <property type="entry name" value="DNA ligase/mRNA capping enzyme"/>
    <property type="match status" value="1"/>
</dbReference>
<dbReference type="Gene3D" id="1.10.287.610">
    <property type="entry name" value="Helix hairpin bin"/>
    <property type="match status" value="1"/>
</dbReference>
<dbReference type="Gene3D" id="2.40.50.140">
    <property type="entry name" value="Nucleic acid-binding proteins"/>
    <property type="match status" value="1"/>
</dbReference>
<dbReference type="HAMAP" id="MF_01588">
    <property type="entry name" value="DNA_ligase_A"/>
    <property type="match status" value="1"/>
</dbReference>
<dbReference type="InterPro" id="IPR001357">
    <property type="entry name" value="BRCT_dom"/>
</dbReference>
<dbReference type="InterPro" id="IPR036420">
    <property type="entry name" value="BRCT_dom_sf"/>
</dbReference>
<dbReference type="InterPro" id="IPR041663">
    <property type="entry name" value="DisA/LigA_HHH"/>
</dbReference>
<dbReference type="InterPro" id="IPR001679">
    <property type="entry name" value="DNA_ligase"/>
</dbReference>
<dbReference type="InterPro" id="IPR018239">
    <property type="entry name" value="DNA_ligase_AS"/>
</dbReference>
<dbReference type="InterPro" id="IPR033136">
    <property type="entry name" value="DNA_ligase_CS"/>
</dbReference>
<dbReference type="InterPro" id="IPR013839">
    <property type="entry name" value="DNAligase_adenylation"/>
</dbReference>
<dbReference type="InterPro" id="IPR013840">
    <property type="entry name" value="DNAligase_N"/>
</dbReference>
<dbReference type="InterPro" id="IPR012340">
    <property type="entry name" value="NA-bd_OB-fold"/>
</dbReference>
<dbReference type="InterPro" id="IPR004150">
    <property type="entry name" value="NAD_DNA_ligase_OB"/>
</dbReference>
<dbReference type="InterPro" id="IPR010994">
    <property type="entry name" value="RuvA_2-like"/>
</dbReference>
<dbReference type="InterPro" id="IPR004149">
    <property type="entry name" value="Znf_DNAligase_C4"/>
</dbReference>
<dbReference type="NCBIfam" id="TIGR00575">
    <property type="entry name" value="dnlj"/>
    <property type="match status" value="1"/>
</dbReference>
<dbReference type="NCBIfam" id="NF005932">
    <property type="entry name" value="PRK07956.1"/>
    <property type="match status" value="1"/>
</dbReference>
<dbReference type="PANTHER" id="PTHR23389">
    <property type="entry name" value="CHROMOSOME TRANSMISSION FIDELITY FACTOR 18"/>
    <property type="match status" value="1"/>
</dbReference>
<dbReference type="PANTHER" id="PTHR23389:SF9">
    <property type="entry name" value="DNA LIGASE"/>
    <property type="match status" value="1"/>
</dbReference>
<dbReference type="Pfam" id="PF00533">
    <property type="entry name" value="BRCT"/>
    <property type="match status" value="1"/>
</dbReference>
<dbReference type="Pfam" id="PF01653">
    <property type="entry name" value="DNA_ligase_aden"/>
    <property type="match status" value="1"/>
</dbReference>
<dbReference type="Pfam" id="PF03120">
    <property type="entry name" value="DNA_ligase_OB"/>
    <property type="match status" value="1"/>
</dbReference>
<dbReference type="Pfam" id="PF03119">
    <property type="entry name" value="DNA_ligase_ZBD"/>
    <property type="match status" value="1"/>
</dbReference>
<dbReference type="Pfam" id="PF12826">
    <property type="entry name" value="HHH_2"/>
    <property type="match status" value="1"/>
</dbReference>
<dbReference type="PIRSF" id="PIRSF001604">
    <property type="entry name" value="LigA"/>
    <property type="match status" value="1"/>
</dbReference>
<dbReference type="SMART" id="SM00292">
    <property type="entry name" value="BRCT"/>
    <property type="match status" value="1"/>
</dbReference>
<dbReference type="SMART" id="SM00532">
    <property type="entry name" value="LIGANc"/>
    <property type="match status" value="1"/>
</dbReference>
<dbReference type="SUPFAM" id="SSF52113">
    <property type="entry name" value="BRCT domain"/>
    <property type="match status" value="1"/>
</dbReference>
<dbReference type="SUPFAM" id="SSF56091">
    <property type="entry name" value="DNA ligase/mRNA capping enzyme, catalytic domain"/>
    <property type="match status" value="1"/>
</dbReference>
<dbReference type="SUPFAM" id="SSF50249">
    <property type="entry name" value="Nucleic acid-binding proteins"/>
    <property type="match status" value="1"/>
</dbReference>
<dbReference type="SUPFAM" id="SSF47781">
    <property type="entry name" value="RuvA domain 2-like"/>
    <property type="match status" value="1"/>
</dbReference>
<dbReference type="PROSITE" id="PS50172">
    <property type="entry name" value="BRCT"/>
    <property type="match status" value="1"/>
</dbReference>
<dbReference type="PROSITE" id="PS01055">
    <property type="entry name" value="DNA_LIGASE_N1"/>
    <property type="match status" value="1"/>
</dbReference>
<dbReference type="PROSITE" id="PS01056">
    <property type="entry name" value="DNA_LIGASE_N2"/>
    <property type="match status" value="1"/>
</dbReference>
<proteinExistence type="inferred from homology"/>
<evidence type="ECO:0000255" key="1">
    <source>
        <dbReference type="HAMAP-Rule" id="MF_01588"/>
    </source>
</evidence>
<accession>Q2YLZ6</accession>
<feature type="chain" id="PRO_0000313153" description="DNA ligase">
    <location>
        <begin position="1"/>
        <end position="719"/>
    </location>
</feature>
<feature type="domain" description="BRCT" evidence="1">
    <location>
        <begin position="640"/>
        <end position="719"/>
    </location>
</feature>
<feature type="active site" description="N6-AMP-lysine intermediate" evidence="1">
    <location>
        <position position="128"/>
    </location>
</feature>
<feature type="binding site" evidence="1">
    <location>
        <begin position="42"/>
        <end position="46"/>
    </location>
    <ligand>
        <name>NAD(+)</name>
        <dbReference type="ChEBI" id="CHEBI:57540"/>
    </ligand>
</feature>
<feature type="binding site" evidence="1">
    <location>
        <begin position="92"/>
        <end position="93"/>
    </location>
    <ligand>
        <name>NAD(+)</name>
        <dbReference type="ChEBI" id="CHEBI:57540"/>
    </ligand>
</feature>
<feature type="binding site" evidence="1">
    <location>
        <position position="126"/>
    </location>
    <ligand>
        <name>NAD(+)</name>
        <dbReference type="ChEBI" id="CHEBI:57540"/>
    </ligand>
</feature>
<feature type="binding site" evidence="1">
    <location>
        <position position="149"/>
    </location>
    <ligand>
        <name>NAD(+)</name>
        <dbReference type="ChEBI" id="CHEBI:57540"/>
    </ligand>
</feature>
<feature type="binding site" evidence="1">
    <location>
        <position position="185"/>
    </location>
    <ligand>
        <name>NAD(+)</name>
        <dbReference type="ChEBI" id="CHEBI:57540"/>
    </ligand>
</feature>
<feature type="binding site" evidence="1">
    <location>
        <position position="301"/>
    </location>
    <ligand>
        <name>NAD(+)</name>
        <dbReference type="ChEBI" id="CHEBI:57540"/>
    </ligand>
</feature>
<feature type="binding site" evidence="1">
    <location>
        <position position="325"/>
    </location>
    <ligand>
        <name>NAD(+)</name>
        <dbReference type="ChEBI" id="CHEBI:57540"/>
    </ligand>
</feature>
<feature type="binding site" evidence="1">
    <location>
        <position position="430"/>
    </location>
    <ligand>
        <name>Zn(2+)</name>
        <dbReference type="ChEBI" id="CHEBI:29105"/>
    </ligand>
</feature>
<feature type="binding site" evidence="1">
    <location>
        <position position="433"/>
    </location>
    <ligand>
        <name>Zn(2+)</name>
        <dbReference type="ChEBI" id="CHEBI:29105"/>
    </ligand>
</feature>
<feature type="binding site" evidence="1">
    <location>
        <position position="448"/>
    </location>
    <ligand>
        <name>Zn(2+)</name>
        <dbReference type="ChEBI" id="CHEBI:29105"/>
    </ligand>
</feature>
<feature type="binding site" evidence="1">
    <location>
        <position position="454"/>
    </location>
    <ligand>
        <name>Zn(2+)</name>
        <dbReference type="ChEBI" id="CHEBI:29105"/>
    </ligand>
</feature>
<keyword id="KW-0227">DNA damage</keyword>
<keyword id="KW-0234">DNA repair</keyword>
<keyword id="KW-0235">DNA replication</keyword>
<keyword id="KW-0436">Ligase</keyword>
<keyword id="KW-0460">Magnesium</keyword>
<keyword id="KW-0464">Manganese</keyword>
<keyword id="KW-0479">Metal-binding</keyword>
<keyword id="KW-0520">NAD</keyword>
<keyword id="KW-1185">Reference proteome</keyword>
<keyword id="KW-0862">Zinc</keyword>
<sequence length="719" mass="78681">MSDISVEKLTELEAAAELERLARAIAHHDELYHAKDRPEISDAAYDALKRRNEAIEAHFPALVRDDSPSRRVGAAPALATFAPVVHARPMLSLDNAFSDEDVRDFVGSVYRFLGQLPDDSIAFTAEPKIDGLSMSIRYENGILVSGATRGDGTTGENVTANIRTIAEIPNRLPAGAPAVVEVRGEVYMAKSDFLTLNAQMEAEGKQTYVNPRNTAAGSLRQLDAKVTASRKLRFFAYAWGEMSDMPADTQLGMVEVFRQWGFPVNPLMKRFNSVDGLLAHYRAIGMERPTLDYDIDGVVYKVDRLDLQTRLGFRSRSPRWAIAHKFPAEQALTILRGIDIQVGRTGALTPVARLEPITVGGVVVTNATLHNEDYIKGIGQKGEPIREGRDIRIGDSVIVQRAGDVIPQIVDVVLEEGKKRGEPYQFPHVCPACGSHAVREEGEAVRRCTGGLICPAQAVERIRHFVSRNAFDIEGLGEKQVEFFFNAEDPALCIRSPADIFTLKKRQENSLTKLQNIEGFGATSVKKLYDAIDARREIALHRFLFGLGIRHVGEVNAKRLARAYLSYAAFEKAALEAVPPKEGDRTDKGSEAWQDMLAVEGIGSIVAEAVVDFYGEPHNREVLAALLAEVTPLDEEARVATGSPVEGKTVVFTGSLERMSRDEAKAMAERHGAKTAGSVSKKTDLVVAGPGAGSKLAKATELGIEVINEDDWFKLVGED</sequence>
<name>DNLJ_BRUA2</name>
<protein>
    <recommendedName>
        <fullName evidence="1">DNA ligase</fullName>
        <ecNumber evidence="1">6.5.1.2</ecNumber>
    </recommendedName>
    <alternativeName>
        <fullName evidence="1">Polydeoxyribonucleotide synthase [NAD(+)]</fullName>
    </alternativeName>
</protein>
<comment type="function">
    <text evidence="1">DNA ligase that catalyzes the formation of phosphodiester linkages between 5'-phosphoryl and 3'-hydroxyl groups in double-stranded DNA using NAD as a coenzyme and as the energy source for the reaction. It is essential for DNA replication and repair of damaged DNA.</text>
</comment>
<comment type="catalytic activity">
    <reaction evidence="1">
        <text>NAD(+) + (deoxyribonucleotide)n-3'-hydroxyl + 5'-phospho-(deoxyribonucleotide)m = (deoxyribonucleotide)n+m + AMP + beta-nicotinamide D-nucleotide.</text>
        <dbReference type="EC" id="6.5.1.2"/>
    </reaction>
</comment>
<comment type="cofactor">
    <cofactor evidence="1">
        <name>Mg(2+)</name>
        <dbReference type="ChEBI" id="CHEBI:18420"/>
    </cofactor>
    <cofactor evidence="1">
        <name>Mn(2+)</name>
        <dbReference type="ChEBI" id="CHEBI:29035"/>
    </cofactor>
</comment>
<comment type="similarity">
    <text evidence="1">Belongs to the NAD-dependent DNA ligase family. LigA subfamily.</text>
</comment>
<reference key="1">
    <citation type="journal article" date="2005" name="Infect. Immun.">
        <title>Whole-genome analyses of speciation events in pathogenic Brucellae.</title>
        <authorList>
            <person name="Chain P.S."/>
            <person name="Comerci D.J."/>
            <person name="Tolmasky M.E."/>
            <person name="Larimer F.W."/>
            <person name="Malfatti S.A."/>
            <person name="Vergez L.M."/>
            <person name="Aguero F."/>
            <person name="Land M.L."/>
            <person name="Ugalde R.A."/>
            <person name="Garcia E."/>
        </authorList>
    </citation>
    <scope>NUCLEOTIDE SEQUENCE [LARGE SCALE GENOMIC DNA]</scope>
    <source>
        <strain>2308</strain>
    </source>
</reference>
<gene>
    <name evidence="1" type="primary">ligA</name>
    <name type="ordered locus">BAB1_1439</name>
</gene>